<organism>
    <name type="scientific">Physarum polycephalum</name>
    <name type="common">Slime mold</name>
    <dbReference type="NCBI Taxonomy" id="5791"/>
    <lineage>
        <taxon>Eukaryota</taxon>
        <taxon>Amoebozoa</taxon>
        <taxon>Evosea</taxon>
        <taxon>Eumycetozoa</taxon>
        <taxon>Myxogastria</taxon>
        <taxon>Myxogastromycetidae</taxon>
        <taxon>Physariida</taxon>
        <taxon>Physaraceae</taxon>
        <taxon>Physarum</taxon>
    </lineage>
</organism>
<protein>
    <recommendedName>
        <fullName evidence="4">Terpene synthase 4</fullName>
        <shortName evidence="4">TPS4</shortName>
        <ecNumber evidence="3">4.2.3.-</ecNumber>
        <ecNumber evidence="3">4.2.3.125</ecNumber>
        <ecNumber evidence="3">4.2.3.57</ecNumber>
    </recommendedName>
    <alternativeName>
        <fullName evidence="5">Terpene cyclase TPS4</fullName>
    </alternativeName>
</protein>
<gene>
    <name evidence="4" type="primary">TPS4</name>
</gene>
<dbReference type="EC" id="4.2.3.-" evidence="3"/>
<dbReference type="EC" id="4.2.3.125" evidence="3"/>
<dbReference type="EC" id="4.2.3.57" evidence="3"/>
<dbReference type="EMBL" id="MN523655">
    <property type="protein sequence ID" value="QKE43664.1"/>
    <property type="molecule type" value="mRNA"/>
</dbReference>
<dbReference type="SMR" id="P9WEY4"/>
<dbReference type="GO" id="GO:0080016">
    <property type="term" value="F:(-)-E-beta-caryophyllene synthase activity"/>
    <property type="evidence" value="ECO:0007669"/>
    <property type="project" value="UniProtKB-EC"/>
</dbReference>
<dbReference type="GO" id="GO:0046872">
    <property type="term" value="F:metal ion binding"/>
    <property type="evidence" value="ECO:0007669"/>
    <property type="project" value="UniProtKB-KW"/>
</dbReference>
<dbReference type="GO" id="GO:0046246">
    <property type="term" value="P:terpene biosynthetic process"/>
    <property type="evidence" value="ECO:0007669"/>
    <property type="project" value="UniProtKB-ARBA"/>
</dbReference>
<dbReference type="Gene3D" id="1.10.600.10">
    <property type="entry name" value="Farnesyl Diphosphate Synthase"/>
    <property type="match status" value="1"/>
</dbReference>
<dbReference type="InterPro" id="IPR008949">
    <property type="entry name" value="Isoprenoid_synthase_dom_sf"/>
</dbReference>
<dbReference type="InterPro" id="IPR034686">
    <property type="entry name" value="Terpene_cyclase-like_2"/>
</dbReference>
<dbReference type="PANTHER" id="PTHR35201:SF4">
    <property type="entry name" value="BETA-PINACENE SYNTHASE-RELATED"/>
    <property type="match status" value="1"/>
</dbReference>
<dbReference type="PANTHER" id="PTHR35201">
    <property type="entry name" value="TERPENE SYNTHASE"/>
    <property type="match status" value="1"/>
</dbReference>
<dbReference type="Pfam" id="PF19086">
    <property type="entry name" value="Terpene_syn_C_2"/>
    <property type="match status" value="1"/>
</dbReference>
<dbReference type="SFLD" id="SFLDS00005">
    <property type="entry name" value="Isoprenoid_Synthase_Type_I"/>
    <property type="match status" value="1"/>
</dbReference>
<dbReference type="SFLD" id="SFLDG01020">
    <property type="entry name" value="Terpene_Cyclase_Like_2"/>
    <property type="match status" value="1"/>
</dbReference>
<dbReference type="SUPFAM" id="SSF48576">
    <property type="entry name" value="Terpenoid synthases"/>
    <property type="match status" value="1"/>
</dbReference>
<feature type="chain" id="PRO_0000452098" description="Terpene synthase 4">
    <location>
        <begin position="1"/>
        <end position="337"/>
    </location>
</feature>
<feature type="short sequence motif" description="D(D/E)XX(D/E) motif" evidence="6">
    <location>
        <begin position="94"/>
        <end position="98"/>
    </location>
</feature>
<feature type="short sequence motif" description="NSE motif" evidence="6">
    <location>
        <begin position="241"/>
        <end position="249"/>
    </location>
</feature>
<feature type="short sequence motif" description="WxxxxxRY motif" evidence="6">
    <location>
        <begin position="320"/>
        <end position="327"/>
    </location>
</feature>
<feature type="binding site" evidence="1">
    <location>
        <position position="94"/>
    </location>
    <ligand>
        <name>Mg(2+)</name>
        <dbReference type="ChEBI" id="CHEBI:18420"/>
        <label>1</label>
    </ligand>
</feature>
<feature type="binding site" evidence="1">
    <location>
        <position position="98"/>
    </location>
    <ligand>
        <name>Mg(2+)</name>
        <dbReference type="ChEBI" id="CHEBI:18420"/>
        <label>1</label>
    </ligand>
</feature>
<feature type="binding site" evidence="1">
    <location>
        <position position="98"/>
    </location>
    <ligand>
        <name>Mg(2+)</name>
        <dbReference type="ChEBI" id="CHEBI:18420"/>
        <label>2</label>
    </ligand>
</feature>
<feature type="binding site" evidence="1">
    <location>
        <position position="195"/>
    </location>
    <ligand>
        <name>substrate</name>
    </ligand>
</feature>
<feature type="binding site" evidence="1">
    <location>
        <position position="241"/>
    </location>
    <ligand>
        <name>Mg(2+)</name>
        <dbReference type="ChEBI" id="CHEBI:18420"/>
        <label>3</label>
    </ligand>
</feature>
<feature type="binding site" evidence="1">
    <location>
        <position position="245"/>
    </location>
    <ligand>
        <name>Mg(2+)</name>
        <dbReference type="ChEBI" id="CHEBI:18420"/>
        <label>3</label>
    </ligand>
</feature>
<feature type="binding site" evidence="1">
    <location>
        <position position="249"/>
    </location>
    <ligand>
        <name>Mg(2+)</name>
        <dbReference type="ChEBI" id="CHEBI:18420"/>
        <label>3</label>
    </ligand>
</feature>
<reference key="1">
    <citation type="journal article" date="2019" name="Beilstein J. Org. Chem.">
        <title>Emission and biosynthesis of volatile terpenoids from the plasmodial slime mold Physarum polycephalum.</title>
        <authorList>
            <person name="Chen X."/>
            <person name="Koellner T.G."/>
            <person name="Xiong W."/>
            <person name="Wei G."/>
            <person name="Chen F."/>
        </authorList>
    </citation>
    <scope>NUCLEOTIDE SEQUENCE [MRNA]</scope>
    <scope>DOMAIN</scope>
    <scope>FUNCTION</scope>
    <scope>CATALYTIC ACTIVITY</scope>
</reference>
<proteinExistence type="evidence at protein level"/>
<sequence>MSCKSNTLAKNYTNHPLRINEIHLPWKPTIPNTHYEFVRAQVVDLLNELGLCEDKKERDRRDGVIMLASYMYPEAGPQELLFGTMYVLWLFFFDDIFDESKFLKEECNQAAERSLHIFRTGKAPEKNAKLNFSIVQLEDLLLRIFAMANDLAKSSDITARFMKSCEIYFVDGAVPMENFRQMKTLPKLEEYLAVRTIDGGAAACIACFEIVAHLDLSDDIVNEPRVLRMCEIAGQQIAYANDIYSYHREKLHNNSMNSLNIRCQTLSFEDALTEQIAQLNGWVQEFETLKQSLAESALWENSLKMYITGMENIVMGCKVWSESCTRYNLKSLLTVVV</sequence>
<name>TPS4_PHYPO</name>
<evidence type="ECO:0000250" key="1">
    <source>
        <dbReference type="UniProtKB" id="B5HDJ6"/>
    </source>
</evidence>
<evidence type="ECO:0000250" key="2">
    <source>
        <dbReference type="UniProtKB" id="Q9UR08"/>
    </source>
</evidence>
<evidence type="ECO:0000269" key="3">
    <source>
    </source>
</evidence>
<evidence type="ECO:0000303" key="4">
    <source>
    </source>
</evidence>
<evidence type="ECO:0000305" key="5"/>
<evidence type="ECO:0000305" key="6">
    <source>
    </source>
</evidence>
<keyword id="KW-0456">Lyase</keyword>
<keyword id="KW-0460">Magnesium</keyword>
<keyword id="KW-0479">Metal-binding</keyword>
<accession>P9WEY4</accession>
<comment type="function">
    <text evidence="3 6">Terpene synthase that catalyzes the cyclization of farnesyl diphosphate (FPP) into alpha-muurolene, (-)-beta-caryophyllene, and one unidentified sesquiterpene (PubMed:31839833). TPS4 shows only trace monoterpene synthase activity with geranyl diphosphate (GPP) as substrate and produces very small amounts of myrcene (PubMed:31839833). P.polycephalum has a unique biology and these volatile terpenoids could function in internal communication of P.polycephalum, to mark the territory that have been explored, or they may be involved in chemotaxis (Probable).</text>
</comment>
<comment type="catalytic activity">
    <reaction evidence="3">
        <text>(2E,6E)-farnesyl diphosphate = alpha-muurolene + diphosphate</text>
        <dbReference type="Rhea" id="RHEA:33103"/>
        <dbReference type="ChEBI" id="CHEBI:33019"/>
        <dbReference type="ChEBI" id="CHEBI:64797"/>
        <dbReference type="ChEBI" id="CHEBI:175763"/>
        <dbReference type="EC" id="4.2.3.125"/>
    </reaction>
    <physiologicalReaction direction="left-to-right" evidence="3">
        <dbReference type="Rhea" id="RHEA:33104"/>
    </physiologicalReaction>
</comment>
<comment type="catalytic activity">
    <reaction evidence="3">
        <text>(2E,6E)-farnesyl diphosphate = (-)-(E)-beta-caryophyllene + diphosphate</text>
        <dbReference type="Rhea" id="RHEA:28294"/>
        <dbReference type="ChEBI" id="CHEBI:10357"/>
        <dbReference type="ChEBI" id="CHEBI:33019"/>
        <dbReference type="ChEBI" id="CHEBI:175763"/>
        <dbReference type="EC" id="4.2.3.57"/>
    </reaction>
    <physiologicalReaction direction="left-to-right" evidence="3">
        <dbReference type="Rhea" id="RHEA:28295"/>
    </physiologicalReaction>
</comment>
<comment type="cofactor">
    <cofactor evidence="2">
        <name>Mg(2+)</name>
        <dbReference type="ChEBI" id="CHEBI:18420"/>
    </cofactor>
</comment>
<comment type="domain">
    <text evidence="2">The 2 conserved active-site motifs D(D/E)XX(D/E) and NSE are required for coordinating the divalent metal ions that stabilize the PPi moiety of the substrate.</text>
</comment>
<comment type="domain">
    <text evidence="6">The C-terminal WxxxxxRY motif is frequently found in terpene synthases and is important to guide product formation.</text>
</comment>
<comment type="similarity">
    <text evidence="5">Belongs to the terpene synthase family.</text>
</comment>